<protein>
    <recommendedName>
        <fullName>FACT complex subunit SPT16</fullName>
    </recommendedName>
    <alternativeName>
        <fullName>Facilitates chromatin transcription complex subunit SPT16</fullName>
    </alternativeName>
</protein>
<comment type="function">
    <text evidence="1">Component of the FACT complex, a general chromatin factor that acts to reorganize nucleosomes. The FACT complex is involved in multiple processes that require DNA as a template such as mRNA elongation, DNA replication and DNA repair. During transcription elongation the FACT complex acts as a histone chaperone that both destabilizes and restores nucleosomal structure. It facilitates the passage of RNA polymerase II and transcription by promoting the dissociation of one histone H2A-H2B dimer from the nucleosome, then subsequently promotes the reestablishment of the nucleosome following the passage of RNA polymerase II (By similarity).</text>
</comment>
<comment type="subunit">
    <text evidence="1">Forms a stable heterodimer with POB3. The SPT16-POB3 dimer weakly associates with multiple molecules of NHP6 to form the FACT complex (By similarity).</text>
</comment>
<comment type="subcellular location">
    <subcellularLocation>
        <location evidence="1">Nucleus</location>
    </subcellularLocation>
    <subcellularLocation>
        <location evidence="1">Chromosome</location>
    </subcellularLocation>
</comment>
<comment type="similarity">
    <text evidence="4">Belongs to the peptidase M24 family. SPT16 subfamily.</text>
</comment>
<comment type="caution">
    <text evidence="4">Although related to the peptidase M24 family, this protein lacks conserved active site residues suggesting that it may lack peptidase activity.</text>
</comment>
<proteinExistence type="inferred from homology"/>
<evidence type="ECO:0000250" key="1"/>
<evidence type="ECO:0000255" key="2"/>
<evidence type="ECO:0000256" key="3">
    <source>
        <dbReference type="SAM" id="MobiDB-lite"/>
    </source>
</evidence>
<evidence type="ECO:0000305" key="4"/>
<feature type="chain" id="PRO_0000245184" description="FACT complex subunit SPT16">
    <location>
        <begin position="1"/>
        <end position="1033"/>
    </location>
</feature>
<feature type="region of interest" description="Disordered" evidence="3">
    <location>
        <begin position="953"/>
        <end position="1033"/>
    </location>
</feature>
<feature type="coiled-coil region" evidence="2">
    <location>
        <begin position="103"/>
        <end position="128"/>
    </location>
</feature>
<feature type="coiled-coil region" evidence="2">
    <location>
        <begin position="467"/>
        <end position="517"/>
    </location>
</feature>
<feature type="compositionally biased region" description="Acidic residues" evidence="3">
    <location>
        <begin position="957"/>
        <end position="994"/>
    </location>
</feature>
<feature type="compositionally biased region" description="Low complexity" evidence="3">
    <location>
        <begin position="995"/>
        <end position="1005"/>
    </location>
</feature>
<feature type="compositionally biased region" description="Acidic residues" evidence="3">
    <location>
        <begin position="1006"/>
        <end position="1018"/>
    </location>
</feature>
<feature type="compositionally biased region" description="Basic and acidic residues" evidence="3">
    <location>
        <begin position="1019"/>
        <end position="1033"/>
    </location>
</feature>
<dbReference type="EMBL" id="CR382134">
    <property type="protein sequence ID" value="CAG85117.2"/>
    <property type="molecule type" value="Genomic_DNA"/>
</dbReference>
<dbReference type="RefSeq" id="XP_457124.2">
    <property type="nucleotide sequence ID" value="XM_457124.1"/>
</dbReference>
<dbReference type="SMR" id="Q6BXE5"/>
<dbReference type="FunCoup" id="Q6BXE5">
    <property type="interactions" value="1466"/>
</dbReference>
<dbReference type="STRING" id="284592.Q6BXE5"/>
<dbReference type="GeneID" id="2913232"/>
<dbReference type="KEGG" id="dha:DEHA2B03718g"/>
<dbReference type="VEuPathDB" id="FungiDB:DEHA2B03718g"/>
<dbReference type="eggNOG" id="KOG1189">
    <property type="taxonomic scope" value="Eukaryota"/>
</dbReference>
<dbReference type="HOGENOM" id="CLU_004627_1_0_1"/>
<dbReference type="InParanoid" id="Q6BXE5"/>
<dbReference type="OMA" id="YHINTIP"/>
<dbReference type="OrthoDB" id="10251642at2759"/>
<dbReference type="Proteomes" id="UP000000599">
    <property type="component" value="Chromosome B"/>
</dbReference>
<dbReference type="GO" id="GO:0035101">
    <property type="term" value="C:FACT complex"/>
    <property type="evidence" value="ECO:0007669"/>
    <property type="project" value="EnsemblFungi"/>
</dbReference>
<dbReference type="GO" id="GO:0042393">
    <property type="term" value="F:histone binding"/>
    <property type="evidence" value="ECO:0007669"/>
    <property type="project" value="EnsemblFungi"/>
</dbReference>
<dbReference type="GO" id="GO:0140713">
    <property type="term" value="F:histone chaperone activity"/>
    <property type="evidence" value="ECO:0007669"/>
    <property type="project" value="EnsemblFungi"/>
</dbReference>
<dbReference type="GO" id="GO:0031491">
    <property type="term" value="F:nucleosome binding"/>
    <property type="evidence" value="ECO:0007669"/>
    <property type="project" value="EnsemblFungi"/>
</dbReference>
<dbReference type="GO" id="GO:0140719">
    <property type="term" value="P:constitutive heterochromatin formation"/>
    <property type="evidence" value="ECO:0007669"/>
    <property type="project" value="EnsemblFungi"/>
</dbReference>
<dbReference type="GO" id="GO:0006281">
    <property type="term" value="P:DNA repair"/>
    <property type="evidence" value="ECO:0007669"/>
    <property type="project" value="UniProtKB-KW"/>
</dbReference>
<dbReference type="GO" id="GO:0006261">
    <property type="term" value="P:DNA-templated DNA replication"/>
    <property type="evidence" value="ECO:0007669"/>
    <property type="project" value="EnsemblFungi"/>
</dbReference>
<dbReference type="GO" id="GO:0006334">
    <property type="term" value="P:nucleosome assembly"/>
    <property type="evidence" value="ECO:0007669"/>
    <property type="project" value="EnsemblFungi"/>
</dbReference>
<dbReference type="GO" id="GO:0045899">
    <property type="term" value="P:positive regulation of RNA polymerase II transcription preinitiation complex assembly"/>
    <property type="evidence" value="ECO:0007669"/>
    <property type="project" value="EnsemblFungi"/>
</dbReference>
<dbReference type="GO" id="GO:0007063">
    <property type="term" value="P:regulation of sister chromatid cohesion"/>
    <property type="evidence" value="ECO:0007669"/>
    <property type="project" value="EnsemblFungi"/>
</dbReference>
<dbReference type="GO" id="GO:0006368">
    <property type="term" value="P:transcription elongation by RNA polymerase II"/>
    <property type="evidence" value="ECO:0007669"/>
    <property type="project" value="TreeGrafter"/>
</dbReference>
<dbReference type="CDD" id="cd01091">
    <property type="entry name" value="CDC68-like"/>
    <property type="match status" value="1"/>
</dbReference>
<dbReference type="FunFam" id="2.30.29.150:FF:000002">
    <property type="entry name" value="FACT complex subunit SPT16"/>
    <property type="match status" value="1"/>
</dbReference>
<dbReference type="FunFam" id="2.30.29.30:FF:000017">
    <property type="entry name" value="FACT complex subunit SPT16"/>
    <property type="match status" value="1"/>
</dbReference>
<dbReference type="FunFam" id="2.30.29.210:FF:000001">
    <property type="entry name" value="FACT complex subunit spt16"/>
    <property type="match status" value="1"/>
</dbReference>
<dbReference type="FunFam" id="3.90.230.10:FF:000005">
    <property type="entry name" value="FACT complex subunit spt16"/>
    <property type="match status" value="1"/>
</dbReference>
<dbReference type="Gene3D" id="2.30.29.150">
    <property type="match status" value="1"/>
</dbReference>
<dbReference type="Gene3D" id="3.90.230.10">
    <property type="entry name" value="Creatinase/methionine aminopeptidase superfamily"/>
    <property type="match status" value="1"/>
</dbReference>
<dbReference type="Gene3D" id="3.40.350.10">
    <property type="entry name" value="Creatinase/prolidase N-terminal domain"/>
    <property type="match status" value="1"/>
</dbReference>
<dbReference type="Gene3D" id="2.30.29.210">
    <property type="entry name" value="FACT complex subunit Spt16p/Cdc68p"/>
    <property type="match status" value="1"/>
</dbReference>
<dbReference type="Gene3D" id="2.30.29.30">
    <property type="entry name" value="Pleckstrin-homology domain (PH domain)/Phosphotyrosine-binding domain (PTB)"/>
    <property type="match status" value="1"/>
</dbReference>
<dbReference type="InterPro" id="IPR029149">
    <property type="entry name" value="Creatin/AminoP/Spt16_N"/>
</dbReference>
<dbReference type="InterPro" id="IPR036005">
    <property type="entry name" value="Creatinase/aminopeptidase-like"/>
</dbReference>
<dbReference type="InterPro" id="IPR029148">
    <property type="entry name" value="FACT-SPT16_Nlobe"/>
</dbReference>
<dbReference type="InterPro" id="IPR056595">
    <property type="entry name" value="Fact-SPT16_PH"/>
</dbReference>
<dbReference type="InterPro" id="IPR048969">
    <property type="entry name" value="FACT_SPT16_C"/>
</dbReference>
<dbReference type="InterPro" id="IPR013953">
    <property type="entry name" value="FACT_SPT16_M"/>
</dbReference>
<dbReference type="InterPro" id="IPR000994">
    <property type="entry name" value="Pept_M24"/>
</dbReference>
<dbReference type="InterPro" id="IPR011993">
    <property type="entry name" value="PH-like_dom_sf"/>
</dbReference>
<dbReference type="InterPro" id="IPR013719">
    <property type="entry name" value="RTT106/SPT16-like_middle_dom"/>
</dbReference>
<dbReference type="InterPro" id="IPR040258">
    <property type="entry name" value="Spt16"/>
</dbReference>
<dbReference type="InterPro" id="IPR033825">
    <property type="entry name" value="Spt16_M24"/>
</dbReference>
<dbReference type="PANTHER" id="PTHR13980">
    <property type="entry name" value="CDC68 RELATED"/>
    <property type="match status" value="1"/>
</dbReference>
<dbReference type="PANTHER" id="PTHR13980:SF15">
    <property type="entry name" value="FACT COMPLEX SUBUNIT SPT16"/>
    <property type="match status" value="1"/>
</dbReference>
<dbReference type="Pfam" id="PF14826">
    <property type="entry name" value="FACT-Spt16_Nlob"/>
    <property type="match status" value="1"/>
</dbReference>
<dbReference type="Pfam" id="PF00557">
    <property type="entry name" value="Peptidase_M24"/>
    <property type="match status" value="1"/>
</dbReference>
<dbReference type="Pfam" id="PF24824">
    <property type="entry name" value="PH_SPT16"/>
    <property type="match status" value="1"/>
</dbReference>
<dbReference type="Pfam" id="PF08512">
    <property type="entry name" value="Rttp106-like_middle"/>
    <property type="match status" value="1"/>
</dbReference>
<dbReference type="Pfam" id="PF08644">
    <property type="entry name" value="SPT16"/>
    <property type="match status" value="1"/>
</dbReference>
<dbReference type="Pfam" id="PF21091">
    <property type="entry name" value="SPT16_C"/>
    <property type="match status" value="1"/>
</dbReference>
<dbReference type="SMART" id="SM01285">
    <property type="entry name" value="FACT-Spt16_Nlob"/>
    <property type="match status" value="1"/>
</dbReference>
<dbReference type="SMART" id="SM01287">
    <property type="entry name" value="Rtt106"/>
    <property type="match status" value="1"/>
</dbReference>
<dbReference type="SMART" id="SM01286">
    <property type="entry name" value="SPT16"/>
    <property type="match status" value="1"/>
</dbReference>
<dbReference type="SUPFAM" id="SSF55920">
    <property type="entry name" value="Creatinase/aminopeptidase"/>
    <property type="match status" value="1"/>
</dbReference>
<accession>Q6BXE5</accession>
<gene>
    <name type="primary">SPT16</name>
    <name type="ordered locus">DEHA2B03718g</name>
</gene>
<sequence length="1033" mass="117433">MSEVKIDSNSFHKRLSLIQKNLTSIQDKQSCLLLLVGASDDENTYKKTTVLQTWLLGYEFVHTGIYITQDKCVFITSEGKAKYLTNLTSKPTENSSSVEIWPRYKDAEKNKETFKKLIEELKKMSSREKPIGHIAKDQYRGKFIDEWNEVSADAGLSFSDCALLLSESMEIKDSEEFANTKIASKSSTVLMDAFANEMMVVVDEEKKTSNSDLSEKIEDKIDSNKWYTKSATGKKLLQSMKEFDPSLVDWCYSPIIQSGGEYDLKPSAQSTTKALVGDGVILASLGLRYKSYCSNVARTFFIDPTPAMETNYDFLLKLQNHVTSTLLRDGTVASQVYQGALDFIKSEKPDLVQHFTKNCGWLMGIEFRDSTFVLNSKNERKLQNGQIISLTLGFSNLTNDKASNPKLKQYSLILTDTFKVSESEPILLTTYPKARSETSFYFKDDEPTAVKSENGGDKKLKSEKNIKTEKNLAANEANSKILKSKLRHESSAADDSNNTEKIRQEIQSKLHEKRQHEGLARFSKADATDASDFKPVFKKYESYVRESQIPSNVRDLKIHVDYKNQTIILPICGRPVPFHINSFKNGSQNEEGDFTYLRLNFNSPGAGGNVSRRAELPYEDSPENSFLRSVTLRSRDHQRMVDVYKAIQDLKKDAVKREQEKKQMADVVSQANLVELKGSRVKKLDQVFIRPQPDTKKIGGVLQIHENGLRYQSSIRMDQKVDILFSNIKHLFFQSCKDELIVIIHCHLKNPIMIGKKKTHDVQFYREASDMAFDETGGRKRRYRYGDEDELQQEQEERRRKALLDKEFKAFAELISDSSSGMVDLDIPFRELGFSGVPFRSSVLCMPTRDCLIQLIDPPYLVVTLEEIEIAHLERVQFGLKNFDLVFVFKDFNKSVVHINTIPMELLEDVKSWLTDVDIPISEGQMNLNWATIMKTVQSDPYQFFADGGWSFLTGEGDSEEEDEEDEESEFEVSDPDPSDEDVESEAGSEDDYSSDASGSDASGGESEEEEEGEDWDEMERKAAREDKRLGAS</sequence>
<keyword id="KW-0158">Chromosome</keyword>
<keyword id="KW-0175">Coiled coil</keyword>
<keyword id="KW-0227">DNA damage</keyword>
<keyword id="KW-0234">DNA repair</keyword>
<keyword id="KW-0235">DNA replication</keyword>
<keyword id="KW-0539">Nucleus</keyword>
<keyword id="KW-1185">Reference proteome</keyword>
<keyword id="KW-0804">Transcription</keyword>
<keyword id="KW-0805">Transcription regulation</keyword>
<organism>
    <name type="scientific">Debaryomyces hansenii (strain ATCC 36239 / CBS 767 / BCRC 21394 / JCM 1990 / NBRC 0083 / IGC 2968)</name>
    <name type="common">Yeast</name>
    <name type="synonym">Torulaspora hansenii</name>
    <dbReference type="NCBI Taxonomy" id="284592"/>
    <lineage>
        <taxon>Eukaryota</taxon>
        <taxon>Fungi</taxon>
        <taxon>Dikarya</taxon>
        <taxon>Ascomycota</taxon>
        <taxon>Saccharomycotina</taxon>
        <taxon>Pichiomycetes</taxon>
        <taxon>Debaryomycetaceae</taxon>
        <taxon>Debaryomyces</taxon>
    </lineage>
</organism>
<name>SPT16_DEBHA</name>
<reference key="1">
    <citation type="journal article" date="2004" name="Nature">
        <title>Genome evolution in yeasts.</title>
        <authorList>
            <person name="Dujon B."/>
            <person name="Sherman D."/>
            <person name="Fischer G."/>
            <person name="Durrens P."/>
            <person name="Casaregola S."/>
            <person name="Lafontaine I."/>
            <person name="de Montigny J."/>
            <person name="Marck C."/>
            <person name="Neuveglise C."/>
            <person name="Talla E."/>
            <person name="Goffard N."/>
            <person name="Frangeul L."/>
            <person name="Aigle M."/>
            <person name="Anthouard V."/>
            <person name="Babour A."/>
            <person name="Barbe V."/>
            <person name="Barnay S."/>
            <person name="Blanchin S."/>
            <person name="Beckerich J.-M."/>
            <person name="Beyne E."/>
            <person name="Bleykasten C."/>
            <person name="Boisrame A."/>
            <person name="Boyer J."/>
            <person name="Cattolico L."/>
            <person name="Confanioleri F."/>
            <person name="de Daruvar A."/>
            <person name="Despons L."/>
            <person name="Fabre E."/>
            <person name="Fairhead C."/>
            <person name="Ferry-Dumazet H."/>
            <person name="Groppi A."/>
            <person name="Hantraye F."/>
            <person name="Hennequin C."/>
            <person name="Jauniaux N."/>
            <person name="Joyet P."/>
            <person name="Kachouri R."/>
            <person name="Kerrest A."/>
            <person name="Koszul R."/>
            <person name="Lemaire M."/>
            <person name="Lesur I."/>
            <person name="Ma L."/>
            <person name="Muller H."/>
            <person name="Nicaud J.-M."/>
            <person name="Nikolski M."/>
            <person name="Oztas S."/>
            <person name="Ozier-Kalogeropoulos O."/>
            <person name="Pellenz S."/>
            <person name="Potier S."/>
            <person name="Richard G.-F."/>
            <person name="Straub M.-L."/>
            <person name="Suleau A."/>
            <person name="Swennen D."/>
            <person name="Tekaia F."/>
            <person name="Wesolowski-Louvel M."/>
            <person name="Westhof E."/>
            <person name="Wirth B."/>
            <person name="Zeniou-Meyer M."/>
            <person name="Zivanovic Y."/>
            <person name="Bolotin-Fukuhara M."/>
            <person name="Thierry A."/>
            <person name="Bouchier C."/>
            <person name="Caudron B."/>
            <person name="Scarpelli C."/>
            <person name="Gaillardin C."/>
            <person name="Weissenbach J."/>
            <person name="Wincker P."/>
            <person name="Souciet J.-L."/>
        </authorList>
    </citation>
    <scope>NUCLEOTIDE SEQUENCE [LARGE SCALE GENOMIC DNA]</scope>
    <source>
        <strain>ATCC 36239 / CBS 767 / BCRC 21394 / JCM 1990 / NBRC 0083 / IGC 2968</strain>
    </source>
</reference>